<name>PLCG2_HUMAN</name>
<evidence type="ECO:0000250" key="1">
    <source>
        <dbReference type="UniProtKB" id="P24135"/>
    </source>
</evidence>
<evidence type="ECO:0000250" key="2">
    <source>
        <dbReference type="UniProtKB" id="Q8CIH5"/>
    </source>
</evidence>
<evidence type="ECO:0000255" key="3">
    <source>
        <dbReference type="PROSITE-ProRule" id="PRU00041"/>
    </source>
</evidence>
<evidence type="ECO:0000255" key="4">
    <source>
        <dbReference type="PROSITE-ProRule" id="PRU00145"/>
    </source>
</evidence>
<evidence type="ECO:0000255" key="5">
    <source>
        <dbReference type="PROSITE-ProRule" id="PRU00191"/>
    </source>
</evidence>
<evidence type="ECO:0000255" key="6">
    <source>
        <dbReference type="PROSITE-ProRule" id="PRU00192"/>
    </source>
</evidence>
<evidence type="ECO:0000255" key="7">
    <source>
        <dbReference type="PROSITE-ProRule" id="PRU00270"/>
    </source>
</evidence>
<evidence type="ECO:0000255" key="8">
    <source>
        <dbReference type="PROSITE-ProRule" id="PRU00271"/>
    </source>
</evidence>
<evidence type="ECO:0000269" key="9">
    <source>
    </source>
</evidence>
<evidence type="ECO:0000269" key="10">
    <source>
    </source>
</evidence>
<evidence type="ECO:0000269" key="11">
    <source>
    </source>
</evidence>
<evidence type="ECO:0000269" key="12">
    <source>
    </source>
</evidence>
<evidence type="ECO:0000269" key="13">
    <source>
    </source>
</evidence>
<evidence type="ECO:0000269" key="14">
    <source>
    </source>
</evidence>
<evidence type="ECO:0000269" key="15">
    <source>
    </source>
</evidence>
<evidence type="ECO:0000305" key="16"/>
<evidence type="ECO:0000305" key="17">
    <source>
    </source>
</evidence>
<evidence type="ECO:0000312" key="18">
    <source>
        <dbReference type="HGNC" id="HGNC:9066"/>
    </source>
</evidence>
<evidence type="ECO:0007744" key="19">
    <source>
    </source>
</evidence>
<evidence type="ECO:0007744" key="20">
    <source>
    </source>
</evidence>
<evidence type="ECO:0007829" key="21">
    <source>
        <dbReference type="PDB" id="2K2J"/>
    </source>
</evidence>
<evidence type="ECO:0007829" key="22">
    <source>
        <dbReference type="PDB" id="2W2X"/>
    </source>
</evidence>
<evidence type="ECO:0007829" key="23">
    <source>
        <dbReference type="PDB" id="8T7C"/>
    </source>
</evidence>
<accession>P16885</accession>
<accession>D3DUL3</accession>
<accession>Q3ZTS2</accession>
<accession>Q59H45</accession>
<accession>Q969T5</accession>
<reference key="1">
    <citation type="journal article" date="1988" name="FEBS Lett.">
        <title>Complete cDNA encoding a putative phospholipase C from transformed human lymphocytes.</title>
        <authorList>
            <person name="Ohta S."/>
            <person name="Matsui A."/>
            <person name="Nazawa Y."/>
            <person name="Kagawa Y."/>
        </authorList>
    </citation>
    <scope>NUCLEOTIDE SEQUENCE [MRNA]</scope>
    <source>
        <tissue>Lymphoblast</tissue>
    </source>
</reference>
<reference key="2">
    <citation type="submission" date="2005-03" db="EMBL/GenBank/DDBJ databases">
        <authorList>
            <person name="Totoki Y."/>
            <person name="Toyoda A."/>
            <person name="Takeda T."/>
            <person name="Sakaki Y."/>
            <person name="Tanaka A."/>
            <person name="Yokoyama S."/>
            <person name="Ohara O."/>
            <person name="Nagase T."/>
            <person name="Kikuno R.F."/>
        </authorList>
    </citation>
    <scope>NUCLEOTIDE SEQUENCE [LARGE SCALE MRNA]</scope>
    <source>
        <tissue>Spleen</tissue>
    </source>
</reference>
<reference key="3">
    <citation type="journal article" date="2006" name="BMC Genomics">
        <title>NovelFam3000 -- uncharacterized human protein domains conserved across model organisms.</title>
        <authorList>
            <person name="Kemmer D."/>
            <person name="Podowski R.M."/>
            <person name="Arenillas D."/>
            <person name="Lim J."/>
            <person name="Hodges E."/>
            <person name="Roth P."/>
            <person name="Sonnhammer E.L.L."/>
            <person name="Hoeoeg C."/>
            <person name="Wasserman W.W."/>
        </authorList>
    </citation>
    <scope>NUCLEOTIDE SEQUENCE [LARGE SCALE MRNA]</scope>
</reference>
<reference key="4">
    <citation type="journal article" date="2004" name="Nature">
        <title>The sequence and analysis of duplication-rich human chromosome 16.</title>
        <authorList>
            <person name="Martin J."/>
            <person name="Han C."/>
            <person name="Gordon L.A."/>
            <person name="Terry A."/>
            <person name="Prabhakar S."/>
            <person name="She X."/>
            <person name="Xie G."/>
            <person name="Hellsten U."/>
            <person name="Chan Y.M."/>
            <person name="Altherr M."/>
            <person name="Couronne O."/>
            <person name="Aerts A."/>
            <person name="Bajorek E."/>
            <person name="Black S."/>
            <person name="Blumer H."/>
            <person name="Branscomb E."/>
            <person name="Brown N.C."/>
            <person name="Bruno W.J."/>
            <person name="Buckingham J.M."/>
            <person name="Callen D.F."/>
            <person name="Campbell C.S."/>
            <person name="Campbell M.L."/>
            <person name="Campbell E.W."/>
            <person name="Caoile C."/>
            <person name="Challacombe J.F."/>
            <person name="Chasteen L.A."/>
            <person name="Chertkov O."/>
            <person name="Chi H.C."/>
            <person name="Christensen M."/>
            <person name="Clark L.M."/>
            <person name="Cohn J.D."/>
            <person name="Denys M."/>
            <person name="Detter J.C."/>
            <person name="Dickson M."/>
            <person name="Dimitrijevic-Bussod M."/>
            <person name="Escobar J."/>
            <person name="Fawcett J.J."/>
            <person name="Flowers D."/>
            <person name="Fotopulos D."/>
            <person name="Glavina T."/>
            <person name="Gomez M."/>
            <person name="Gonzales E."/>
            <person name="Goodstein D."/>
            <person name="Goodwin L.A."/>
            <person name="Grady D.L."/>
            <person name="Grigoriev I."/>
            <person name="Groza M."/>
            <person name="Hammon N."/>
            <person name="Hawkins T."/>
            <person name="Haydu L."/>
            <person name="Hildebrand C.E."/>
            <person name="Huang W."/>
            <person name="Israni S."/>
            <person name="Jett J."/>
            <person name="Jewett P.B."/>
            <person name="Kadner K."/>
            <person name="Kimball H."/>
            <person name="Kobayashi A."/>
            <person name="Krawczyk M.-C."/>
            <person name="Leyba T."/>
            <person name="Longmire J.L."/>
            <person name="Lopez F."/>
            <person name="Lou Y."/>
            <person name="Lowry S."/>
            <person name="Ludeman T."/>
            <person name="Manohar C.F."/>
            <person name="Mark G.A."/>
            <person name="McMurray K.L."/>
            <person name="Meincke L.J."/>
            <person name="Morgan J."/>
            <person name="Moyzis R.K."/>
            <person name="Mundt M.O."/>
            <person name="Munk A.C."/>
            <person name="Nandkeshwar R.D."/>
            <person name="Pitluck S."/>
            <person name="Pollard M."/>
            <person name="Predki P."/>
            <person name="Parson-Quintana B."/>
            <person name="Ramirez L."/>
            <person name="Rash S."/>
            <person name="Retterer J."/>
            <person name="Ricke D.O."/>
            <person name="Robinson D.L."/>
            <person name="Rodriguez A."/>
            <person name="Salamov A."/>
            <person name="Saunders E.H."/>
            <person name="Scott D."/>
            <person name="Shough T."/>
            <person name="Stallings R.L."/>
            <person name="Stalvey M."/>
            <person name="Sutherland R.D."/>
            <person name="Tapia R."/>
            <person name="Tesmer J.G."/>
            <person name="Thayer N."/>
            <person name="Thompson L.S."/>
            <person name="Tice H."/>
            <person name="Torney D.C."/>
            <person name="Tran-Gyamfi M."/>
            <person name="Tsai M."/>
            <person name="Ulanovsky L.E."/>
            <person name="Ustaszewska A."/>
            <person name="Vo N."/>
            <person name="White P.S."/>
            <person name="Williams A.L."/>
            <person name="Wills P.L."/>
            <person name="Wu J.-R."/>
            <person name="Wu K."/>
            <person name="Yang J."/>
            <person name="DeJong P."/>
            <person name="Bruce D."/>
            <person name="Doggett N.A."/>
            <person name="Deaven L."/>
            <person name="Schmutz J."/>
            <person name="Grimwood J."/>
            <person name="Richardson P."/>
            <person name="Rokhsar D.S."/>
            <person name="Eichler E.E."/>
            <person name="Gilna P."/>
            <person name="Lucas S.M."/>
            <person name="Myers R.M."/>
            <person name="Rubin E.M."/>
            <person name="Pennacchio L.A."/>
        </authorList>
    </citation>
    <scope>NUCLEOTIDE SEQUENCE [LARGE SCALE GENOMIC DNA]</scope>
</reference>
<reference key="5">
    <citation type="submission" date="2005-09" db="EMBL/GenBank/DDBJ databases">
        <authorList>
            <person name="Mural R.J."/>
            <person name="Istrail S."/>
            <person name="Sutton G.G."/>
            <person name="Florea L."/>
            <person name="Halpern A.L."/>
            <person name="Mobarry C.M."/>
            <person name="Lippert R."/>
            <person name="Walenz B."/>
            <person name="Shatkay H."/>
            <person name="Dew I."/>
            <person name="Miller J.R."/>
            <person name="Flanigan M.J."/>
            <person name="Edwards N.J."/>
            <person name="Bolanos R."/>
            <person name="Fasulo D."/>
            <person name="Halldorsson B.V."/>
            <person name="Hannenhalli S."/>
            <person name="Turner R."/>
            <person name="Yooseph S."/>
            <person name="Lu F."/>
            <person name="Nusskern D.R."/>
            <person name="Shue B.C."/>
            <person name="Zheng X.H."/>
            <person name="Zhong F."/>
            <person name="Delcher A.L."/>
            <person name="Huson D.H."/>
            <person name="Kravitz S.A."/>
            <person name="Mouchard L."/>
            <person name="Reinert K."/>
            <person name="Remington K.A."/>
            <person name="Clark A.G."/>
            <person name="Waterman M.S."/>
            <person name="Eichler E.E."/>
            <person name="Adams M.D."/>
            <person name="Hunkapiller M.W."/>
            <person name="Myers E.W."/>
            <person name="Venter J.C."/>
        </authorList>
    </citation>
    <scope>NUCLEOTIDE SEQUENCE [LARGE SCALE GENOMIC DNA]</scope>
</reference>
<reference key="6">
    <citation type="journal article" date="2004" name="Genome Res.">
        <title>The status, quality, and expansion of the NIH full-length cDNA project: the Mammalian Gene Collection (MGC).</title>
        <authorList>
            <consortium name="The MGC Project Team"/>
        </authorList>
    </citation>
    <scope>NUCLEOTIDE SEQUENCE [LARGE SCALE MRNA]</scope>
    <scope>VARIANTS ARG-244 AND TYR-883</scope>
    <source>
        <tissue>Lymph</tissue>
    </source>
</reference>
<reference key="7">
    <citation type="journal article" date="2001" name="J. Biol. Chem.">
        <title>Tyrosine residues in phospholipase Cgamma 2 essential for the enzyme function in B-cell signaling.</title>
        <authorList>
            <person name="Rodriguez R."/>
            <person name="Matsuda M."/>
            <person name="Perisic O."/>
            <person name="Bravo J."/>
            <person name="Paul A."/>
            <person name="Jones N.P."/>
            <person name="Light Y."/>
            <person name="Swann K."/>
            <person name="Williams R.L."/>
            <person name="Katan M."/>
        </authorList>
    </citation>
    <scope>PHOSPHORYLATION AT TYR-753 AND TYR-759</scope>
</reference>
<reference key="8">
    <citation type="journal article" date="2002" name="Mol. Pharmacol.">
        <title>Activation of phospholipase Cgamma2 by tyrosine phosphorylation.</title>
        <authorList>
            <person name="Ozdener F."/>
            <person name="Dangelmaier C."/>
            <person name="Ashby B."/>
            <person name="Kunapuli S.P."/>
            <person name="Daniel J.L."/>
        </authorList>
    </citation>
    <scope>PHOSPHORYLATION AT TYR-753 AND TYR-759</scope>
</reference>
<reference key="9">
    <citation type="journal article" date="2004" name="Anal. Chem.">
        <title>Robust phosphoproteomic profiling of tyrosine phosphorylation sites from human T cells using immobilized metal affinity chromatography and tandem mass spectrometry.</title>
        <authorList>
            <person name="Brill L.M."/>
            <person name="Salomon A.R."/>
            <person name="Ficarro S.B."/>
            <person name="Mukherji M."/>
            <person name="Stettler-Gill M."/>
            <person name="Peters E.C."/>
        </authorList>
    </citation>
    <scope>PHOSPHORYLATION [LARGE SCALE ANALYSIS] AT TYR-1245</scope>
    <scope>IDENTIFICATION BY MASS SPECTROMETRY [LARGE SCALE ANALYSIS]</scope>
    <source>
        <tissue>Leukemic T-cell</tissue>
    </source>
</reference>
<reference key="10">
    <citation type="journal article" date="2009" name="Sci. Signal.">
        <title>Quantitative phosphoproteomic analysis of T cell receptor signaling reveals system-wide modulation of protein-protein interactions.</title>
        <authorList>
            <person name="Mayya V."/>
            <person name="Lundgren D.H."/>
            <person name="Hwang S.-I."/>
            <person name="Rezaul K."/>
            <person name="Wu L."/>
            <person name="Eng J.K."/>
            <person name="Rodionov V."/>
            <person name="Han D.K."/>
        </authorList>
    </citation>
    <scope>PHOSPHORYLATION [LARGE SCALE ANALYSIS] AT TYR-753; TYR-759 AND TYR-1217</scope>
    <scope>IDENTIFICATION BY MASS SPECTROMETRY [LARGE SCALE ANALYSIS]</scope>
    <source>
        <tissue>Leukemic T-cell</tissue>
    </source>
</reference>
<reference key="11">
    <citation type="journal article" date="2011" name="BMC Syst. Biol.">
        <title>Initial characterization of the human central proteome.</title>
        <authorList>
            <person name="Burkard T.R."/>
            <person name="Planyavsky M."/>
            <person name="Kaupe I."/>
            <person name="Breitwieser F.P."/>
            <person name="Buerckstuemmer T."/>
            <person name="Bennett K.L."/>
            <person name="Superti-Furga G."/>
            <person name="Colinge J."/>
        </authorList>
    </citation>
    <scope>IDENTIFICATION BY MASS SPECTROMETRY [LARGE SCALE ANALYSIS]</scope>
</reference>
<reference key="12">
    <citation type="journal article" date="2013" name="Cell Res.">
        <title>Early estrogen-induced gene 1, a novel RANK signaling component, is essential for osteoclastogenesis.</title>
        <authorList>
            <person name="Choi H.K."/>
            <person name="Kang H.R."/>
            <person name="Jung E."/>
            <person name="Kim T.E."/>
            <person name="Lin J.J."/>
            <person name="Lee S.Y."/>
        </authorList>
    </citation>
    <scope>IDENTIFICATION IN A COMPLEX WITH EEIG1; TNFRSF11A; GAB2; TEC AND BTK</scope>
</reference>
<reference key="13">
    <citation type="journal article" date="2012" name="N. Engl. J. Med.">
        <title>Cold urticaria, immunodeficiency, and autoimmunity related to PLCG2 deletions.</title>
        <authorList>
            <person name="Ombrello M.J."/>
            <person name="Remmers E.F."/>
            <person name="Sun G."/>
            <person name="Freeman A.F."/>
            <person name="Datta S."/>
            <person name="Torabi-Parizi P."/>
            <person name="Subramanian N."/>
            <person name="Bunney T.D."/>
            <person name="Baxendale R.W."/>
            <person name="Martins M.S."/>
            <person name="Romberg N."/>
            <person name="Komarow H."/>
            <person name="Aksentijevich I."/>
            <person name="Kim H.S."/>
            <person name="Ho J."/>
            <person name="Cruse G."/>
            <person name="Jung M.Y."/>
            <person name="Gilfillan A.M."/>
            <person name="Metcalfe D.D."/>
            <person name="Nelson C."/>
            <person name="O'Brien M."/>
            <person name="Wisch L."/>
            <person name="Stone K."/>
            <person name="Douek D.C."/>
            <person name="Gandhi C."/>
            <person name="Wanderer A.A."/>
            <person name="Lee H."/>
            <person name="Nelson S.F."/>
            <person name="Shianna K.V."/>
            <person name="Cirulli E.T."/>
            <person name="Goldstein D.B."/>
            <person name="Long E.O."/>
            <person name="Moir S."/>
            <person name="Meffre E."/>
            <person name="Holland S.M."/>
            <person name="Kastner D.L."/>
            <person name="Katan M."/>
            <person name="Hoffman H.M."/>
            <person name="Milner J.D."/>
        </authorList>
    </citation>
    <scope>INVOLVEMENT IN FCAS3</scope>
</reference>
<reference key="14">
    <citation type="journal article" date="2012" name="Am. J. Hum. Genet.">
        <title>A hypermorphic missense mutation in PLCG2, encoding phospholipase Cgamma2, causes a dominantly inherited autoinflammatory disease with immunodeficiency.</title>
        <authorList>
            <person name="Zhou Q."/>
            <person name="Lee G.S."/>
            <person name="Brady J."/>
            <person name="Datta S."/>
            <person name="Katan M."/>
            <person name="Sheikh A."/>
            <person name="Martins M.S."/>
            <person name="Bunney T.D."/>
            <person name="Santich B.H."/>
            <person name="Moir S."/>
            <person name="Kuhns D.B."/>
            <person name="Long Priel D.A."/>
            <person name="Ombrello A."/>
            <person name="Stone D."/>
            <person name="Ombrello M.J."/>
            <person name="Khan J."/>
            <person name="Milner J.D."/>
            <person name="Kastner D.L."/>
            <person name="Aksentijevich I."/>
        </authorList>
    </citation>
    <scope>VARIANT APLAID TYR-707</scope>
    <scope>CATALYTIC ACTIVITY</scope>
    <scope>FUNCTION</scope>
    <scope>CHARACTERIZATION OF VARIANT APLAID TYR-707</scope>
</reference>
<reference key="15">
    <citation type="journal article" date="2014" name="N. Engl. J. Med.">
        <title>Resistance mechanisms for the Bruton's tyrosine kinase inhibitor ibrutinib.</title>
        <authorList>
            <person name="Woyach J.A."/>
            <person name="Furman R.R."/>
            <person name="Liu T.M."/>
            <person name="Ozer H.G."/>
            <person name="Zapatka M."/>
            <person name="Ruppert A.S."/>
            <person name="Xue L."/>
            <person name="Li D.H."/>
            <person name="Steggerda S.M."/>
            <person name="Versele M."/>
            <person name="Dave S.S."/>
            <person name="Zhang J."/>
            <person name="Yilmaz A.S."/>
            <person name="Jaglowski S.M."/>
            <person name="Blum K.A."/>
            <person name="Lozanski A."/>
            <person name="Lozanski G."/>
            <person name="James D.F."/>
            <person name="Barrientos J.C."/>
            <person name="Lichter P."/>
            <person name="Stilgenbauer S."/>
            <person name="Buggy J.J."/>
            <person name="Chang B.Y."/>
            <person name="Johnson A.J."/>
            <person name="Byrd J.C."/>
        </authorList>
    </citation>
    <scope>VARIANTS TRP-665 AND PHE-845</scope>
</reference>
<protein>
    <recommendedName>
        <fullName evidence="16">1-phosphatidylinositol 4,5-bisphosphate phosphodiesterase gamma-2</fullName>
        <ecNumber evidence="13">3.1.4.11</ecNumber>
    </recommendedName>
    <alternativeName>
        <fullName>Phosphoinositide phospholipase C-gamma-2</fullName>
    </alternativeName>
    <alternativeName>
        <fullName>Phospholipase C-IV</fullName>
        <shortName>PLC-IV</shortName>
    </alternativeName>
    <alternativeName>
        <fullName>Phospholipase C-gamma-2</fullName>
        <shortName>PLC-gamma-2</shortName>
    </alternativeName>
</protein>
<proteinExistence type="evidence at protein level"/>
<comment type="function">
    <text evidence="13">The production of the second messenger molecules diacylglycerol (DAG) and inositol 1,4,5-trisphosphate (IP3) is mediated by activated phosphatidylinositol-specific phospholipase C enzymes. It is a crucial enzyme in transmembrane signaling.</text>
</comment>
<comment type="catalytic activity">
    <reaction evidence="13">
        <text>a 1,2-diacyl-sn-glycero-3-phospho-(1D-myo-inositol-4,5-bisphosphate) + H2O = 1D-myo-inositol 1,4,5-trisphosphate + a 1,2-diacyl-sn-glycerol + H(+)</text>
        <dbReference type="Rhea" id="RHEA:33179"/>
        <dbReference type="ChEBI" id="CHEBI:15377"/>
        <dbReference type="ChEBI" id="CHEBI:15378"/>
        <dbReference type="ChEBI" id="CHEBI:17815"/>
        <dbReference type="ChEBI" id="CHEBI:58456"/>
        <dbReference type="ChEBI" id="CHEBI:203600"/>
        <dbReference type="EC" id="3.1.4.11"/>
    </reaction>
    <physiologicalReaction direction="left-to-right" evidence="17">
        <dbReference type="Rhea" id="RHEA:33180"/>
    </physiologicalReaction>
</comment>
<comment type="cofactor">
    <cofactor>
        <name>Ca(2+)</name>
        <dbReference type="ChEBI" id="CHEBI:29108"/>
    </cofactor>
</comment>
<comment type="subunit">
    <text evidence="2 14">Part of a complex composed of EEIG1, TNFRSF11A/RANK, PLCG2, GAB2, TEC and BTK; complex formation increases in the presence of TNFSF11/RANKL (PubMed:23478294). Interacts (via SH2 domain) with CSF1R (tyrosine phosphorylated). Interacts constitutively with THEMIS2.</text>
</comment>
<comment type="interaction">
    <interactant intactId="EBI-617403">
        <id>P16885</id>
    </interactant>
    <interactant intactId="EBI-608057">
        <id>P10275</id>
        <label>AR</label>
    </interactant>
    <organismsDiffer>false</organismsDiffer>
    <experiments>6</experiments>
</comment>
<comment type="interaction">
    <interactant intactId="EBI-617403">
        <id>P16885</id>
    </interactant>
    <interactant intactId="EBI-297353">
        <id>P00533</id>
        <label>EGFR</label>
    </interactant>
    <organismsDiffer>false</organismsDiffer>
    <experiments>6</experiments>
</comment>
<comment type="interaction">
    <interactant intactId="EBI-617403">
        <id>P16885</id>
    </interactant>
    <interactant intactId="EBI-617321">
        <id>P19235</id>
        <label>EPOR</label>
    </interactant>
    <organismsDiffer>false</organismsDiffer>
    <experiments>3</experiments>
</comment>
<comment type="interaction">
    <interactant intactId="EBI-617403">
        <id>P16885</id>
    </interactant>
    <interactant intactId="EBI-641062">
        <id>P04626</id>
        <label>ERBB2</label>
    </interactant>
    <organismsDiffer>false</organismsDiffer>
    <experiments>3</experiments>
</comment>
<comment type="interaction">
    <interactant intactId="EBI-617403">
        <id>P16885</id>
    </interactant>
    <interactant intactId="EBI-10696047">
        <id>O95073-2</id>
        <label>FSBP</label>
    </interactant>
    <organismsDiffer>false</organismsDiffer>
    <experiments>2</experiments>
</comment>
<comment type="interaction">
    <interactant intactId="EBI-617403">
        <id>P16885</id>
    </interactant>
    <interactant intactId="EBI-517684">
        <id>Q13480</id>
        <label>GAB1</label>
    </interactant>
    <organismsDiffer>false</organismsDiffer>
    <experiments>15</experiments>
</comment>
<comment type="interaction">
    <interactant intactId="EBI-617403">
        <id>P16885</id>
    </interactant>
    <interactant intactId="EBI-1379503">
        <id>P10721</id>
        <label>KIT</label>
    </interactant>
    <organismsDiffer>false</organismsDiffer>
    <experiments>8</experiments>
</comment>
<comment type="interaction">
    <interactant intactId="EBI-617403">
        <id>P16885</id>
    </interactant>
    <interactant intactId="EBI-357622">
        <id>O43242</id>
        <label>PSMD3</label>
    </interactant>
    <organismsDiffer>false</organismsDiffer>
    <experiments>2</experiments>
</comment>
<comment type="interaction">
    <interactant intactId="EBI-617403">
        <id>P16885</id>
    </interactant>
    <interactant intactId="EBI-3923013">
        <id>O14796</id>
        <label>SH2D1B</label>
    </interactant>
    <organismsDiffer>false</organismsDiffer>
    <experiments>2</experiments>
</comment>
<comment type="interaction">
    <interactant intactId="EBI-617403">
        <id>P16885</id>
    </interactant>
    <interactant intactId="EBI-745658">
        <id>P78381</id>
        <label>SLC35A2</label>
    </interactant>
    <organismsDiffer>false</organismsDiffer>
    <experiments>2</experiments>
</comment>
<comment type="subcellular location">
    <subcellularLocation>
        <location evidence="2">Membrane raft</location>
    </subcellularLocation>
</comment>
<comment type="PTM">
    <text evidence="2 9 10">Phosphorylated on tyrosine residues by CSF1R (By similarity). Phosphorylated on tyrosine residues by BTK and SYK; upon ligand-induced activation of a variety of growth factor receptors and immune system receptors. Phosphorylation leads to increased phospholipase activity.</text>
</comment>
<comment type="disease" evidence="12">
    <disease id="DI-03380">
        <name>Familial cold autoinflammatory syndrome 3</name>
        <acronym>FCAS3</acronym>
        <description>An autosomal dominant immune disorder characterized by the development of cutaneous urticaria, erythema, and pruritis in response to cold exposure. Affected individuals have variable additional immunologic defects, including antibody deficiency, decreased numbers of B-cells, defective B-cells, increased susceptibility to infection, and increased risk of autoimmune disorders.</description>
        <dbReference type="MIM" id="614468"/>
    </disease>
    <text>The disease is caused by variants affecting the gene represented in this entry.</text>
</comment>
<comment type="disease" evidence="13">
    <disease id="DI-03601">
        <name>Autoinflammation, antibody deficiency, and immune dysregulation</name>
        <acronym>APLAID</acronym>
        <description>An autosomal dominant systemic disorder characterized by recurrent blistering skin lesions with a dense inflammatory infiltrate and variable involvement of other tissues, including joints, the eye, and the gastrointestinal tract. Affected individuals have a mild humoral immune deficiency associated with recurrent sinopulmonary infections, but no evidence of circulating autoantibodies.</description>
        <dbReference type="MIM" id="614878"/>
    </disease>
    <text>The disease is caused by variants affecting the gene represented in this entry.</text>
</comment>
<comment type="sequence caution" evidence="16">
    <conflict type="frameshift">
        <sequence resource="EMBL-CDS" id="AAA60112"/>
    </conflict>
</comment>
<comment type="sequence caution" evidence="16">
    <conflict type="frameshift">
        <sequence resource="EMBL-CDS" id="AAQ76815"/>
    </conflict>
</comment>
<comment type="sequence caution" evidence="16">
    <conflict type="erroneous initiation">
        <sequence resource="EMBL-CDS" id="BAD92151"/>
    </conflict>
    <text>Extended N-terminus.</text>
</comment>
<comment type="sequence caution" evidence="16">
    <conflict type="frameshift">
        <sequence resource="EMBL-CDS" id="CAA32194"/>
    </conflict>
</comment>
<feature type="chain" id="PRO_0000088501" description="1-phosphatidylinositol 4,5-bisphosphate phosphodiesterase gamma-2">
    <location>
        <begin position="1"/>
        <end position="1265"/>
    </location>
</feature>
<feature type="domain" description="PH" evidence="4">
    <location>
        <begin position="20"/>
        <end position="131"/>
    </location>
</feature>
<feature type="domain" description="PI-PLC X-box" evidence="7">
    <location>
        <begin position="312"/>
        <end position="456"/>
    </location>
</feature>
<feature type="domain" description="SH2 1" evidence="5">
    <location>
        <begin position="532"/>
        <end position="635"/>
    </location>
</feature>
<feature type="domain" description="SH2 2" evidence="5">
    <location>
        <begin position="646"/>
        <end position="735"/>
    </location>
</feature>
<feature type="domain" description="SH3" evidence="6">
    <location>
        <begin position="769"/>
        <end position="829"/>
    </location>
</feature>
<feature type="domain" description="PI-PLC Y-box" evidence="8">
    <location>
        <begin position="930"/>
        <end position="1044"/>
    </location>
</feature>
<feature type="domain" description="C2" evidence="3">
    <location>
        <begin position="1038"/>
        <end position="1169"/>
    </location>
</feature>
<feature type="active site" evidence="7">
    <location>
        <position position="327"/>
    </location>
</feature>
<feature type="active site" evidence="7">
    <location>
        <position position="372"/>
    </location>
</feature>
<feature type="modified residue" description="Phosphotyrosine; by BTK" evidence="9 10 20">
    <location>
        <position position="753"/>
    </location>
</feature>
<feature type="modified residue" description="Phosphotyrosine; by BTK" evidence="9 10 20">
    <location>
        <position position="759"/>
    </location>
</feature>
<feature type="modified residue" description="Phosphotyrosine; by BTK" evidence="1">
    <location>
        <position position="1197"/>
    </location>
</feature>
<feature type="modified residue" description="Phosphotyrosine" evidence="20">
    <location>
        <position position="1217"/>
    </location>
</feature>
<feature type="modified residue" description="Phosphotyrosine" evidence="19">
    <location>
        <position position="1245"/>
    </location>
</feature>
<feature type="sequence variant" id="VAR_031560" description="In dbSNP:rs11548656." evidence="11">
    <original>H</original>
    <variation>R</variation>
    <location>
        <position position="244"/>
    </location>
</feature>
<feature type="sequence variant" id="VAR_031561" description="In dbSNP:rs1143687.">
    <original>R</original>
    <variation>W</variation>
    <location>
        <position position="268"/>
    </location>
</feature>
<feature type="sequence variant" id="VAR_047427" description="In dbSNP:rs11548657.">
    <original>T</original>
    <variation>A</variation>
    <location>
        <position position="541"/>
    </location>
</feature>
<feature type="sequence variant" id="VAR_074310" description="Found in patients with chronic lymphocytic leukemia; uncertain significance; results in resistance to ibrutinib therapy; dbSNP:rs1057519831." evidence="15">
    <original>R</original>
    <variation>W</variation>
    <location>
        <position position="665"/>
    </location>
</feature>
<feature type="sequence variant" id="VAR_069211" description="In APLAID; results in increased epidermal growth factor-stimulated production of intracellular IP3 and increased intracellular calcium release; is a hypermorphic mutation; dbSNP:rs397514562." evidence="13">
    <original>S</original>
    <variation>Y</variation>
    <location>
        <position position="707"/>
    </location>
</feature>
<feature type="sequence variant" id="VAR_074311" description="Found in patients with chronic lymphocytic leukemia; uncertain significance; results in resistance to ibrutinib therapy; dbSNP:rs1057519832." evidence="15">
    <original>L</original>
    <variation>F</variation>
    <location>
        <position position="845"/>
    </location>
</feature>
<feature type="sequence variant" id="VAR_047428" description="In dbSNP:rs17856213." evidence="11">
    <original>D</original>
    <variation>Y</variation>
    <location>
        <position position="883"/>
    </location>
</feature>
<feature type="sequence conflict" description="In Ref. 1; CAA32194/AAA60112 and 3; AAQ76815." evidence="16" ref="1 3">
    <original>TFSSI</original>
    <variation>RFRRM</variation>
    <location>
        <begin position="606"/>
        <end position="610"/>
    </location>
</feature>
<feature type="sequence conflict" description="In Ref. 1; AAA60112/CAA32194 and 3; AAQ76815." evidence="16" ref="1 3">
    <original>R</original>
    <variation>P</variation>
    <location>
        <position position="623"/>
    </location>
</feature>
<feature type="sequence conflict" description="In Ref. 1; AAA60112/CAA32194 and 3; AAQ76815." evidence="16" ref="1 3">
    <original>M</original>
    <variation>T</variation>
    <location>
        <position position="745"/>
    </location>
</feature>
<feature type="sequence conflict" description="In Ref. 1; AAA60112/CAA32194 and 3; AAQ76815." evidence="16" ref="1 3">
    <original>Q</original>
    <variation>E</variation>
    <location>
        <position position="880"/>
    </location>
</feature>
<feature type="sequence conflict" description="In Ref. 1; AAA60112/CAA32194 and 3; AAQ76815." evidence="16" ref="1 3">
    <original>T</original>
    <variation>S</variation>
    <location>
        <position position="912"/>
    </location>
</feature>
<feature type="sequence conflict" description="In Ref. 1; AAA60112/CAA32194 and 3; AAQ76815." evidence="16" ref="1 3">
    <original>D</original>
    <variation>G</variation>
    <location>
        <position position="1095"/>
    </location>
</feature>
<feature type="helix" evidence="23">
    <location>
        <begin position="19"/>
        <end position="24"/>
    </location>
</feature>
<feature type="strand" evidence="23">
    <location>
        <begin position="26"/>
        <end position="31"/>
    </location>
</feature>
<feature type="strand" evidence="23">
    <location>
        <begin position="33"/>
        <end position="37"/>
    </location>
</feature>
<feature type="strand" evidence="23">
    <location>
        <begin position="39"/>
        <end position="46"/>
    </location>
</feature>
<feature type="turn" evidence="23">
    <location>
        <begin position="47"/>
        <end position="50"/>
    </location>
</feature>
<feature type="strand" evidence="23">
    <location>
        <begin position="51"/>
        <end position="60"/>
    </location>
</feature>
<feature type="strand" evidence="23">
    <location>
        <begin position="62"/>
        <end position="66"/>
    </location>
</feature>
<feature type="helix" evidence="23">
    <location>
        <begin position="67"/>
        <end position="69"/>
    </location>
</feature>
<feature type="strand" evidence="23">
    <location>
        <begin position="70"/>
        <end position="77"/>
    </location>
</feature>
<feature type="helix" evidence="23">
    <location>
        <begin position="80"/>
        <end position="84"/>
    </location>
</feature>
<feature type="helix" evidence="23">
    <location>
        <begin position="92"/>
        <end position="94"/>
    </location>
</feature>
<feature type="strand" evidence="23">
    <location>
        <begin position="95"/>
        <end position="100"/>
    </location>
</feature>
<feature type="strand" evidence="23">
    <location>
        <begin position="102"/>
        <end position="105"/>
    </location>
</feature>
<feature type="strand" evidence="23">
    <location>
        <begin position="107"/>
        <end position="115"/>
    </location>
</feature>
<feature type="helix" evidence="23">
    <location>
        <begin position="116"/>
        <end position="134"/>
    </location>
</feature>
<feature type="helix" evidence="23">
    <location>
        <begin position="138"/>
        <end position="152"/>
    </location>
</feature>
<feature type="strand" evidence="23">
    <location>
        <begin position="159"/>
        <end position="161"/>
    </location>
</feature>
<feature type="helix" evidence="23">
    <location>
        <begin position="163"/>
        <end position="169"/>
    </location>
</feature>
<feature type="helix" evidence="23">
    <location>
        <begin position="170"/>
        <end position="173"/>
    </location>
</feature>
<feature type="helix" evidence="23">
    <location>
        <begin position="180"/>
        <end position="190"/>
    </location>
</feature>
<feature type="strand" evidence="23">
    <location>
        <begin position="193"/>
        <end position="195"/>
    </location>
</feature>
<feature type="helix" evidence="23">
    <location>
        <begin position="199"/>
        <end position="214"/>
    </location>
</feature>
<feature type="helix" evidence="23">
    <location>
        <begin position="215"/>
        <end position="220"/>
    </location>
</feature>
<feature type="strand" evidence="23">
    <location>
        <begin position="239"/>
        <end position="242"/>
    </location>
</feature>
<feature type="helix" evidence="23">
    <location>
        <begin position="243"/>
        <end position="252"/>
    </location>
</feature>
<feature type="helix" evidence="23">
    <location>
        <begin position="257"/>
        <end position="260"/>
    </location>
</feature>
<feature type="helix" evidence="23">
    <location>
        <begin position="262"/>
        <end position="273"/>
    </location>
</feature>
<feature type="helix" evidence="23">
    <location>
        <begin position="276"/>
        <end position="279"/>
    </location>
</feature>
<feature type="strand" evidence="23">
    <location>
        <begin position="280"/>
        <end position="282"/>
    </location>
</feature>
<feature type="helix" evidence="23">
    <location>
        <begin position="287"/>
        <end position="294"/>
    </location>
</feature>
<feature type="helix" evidence="23">
    <location>
        <begin position="297"/>
        <end position="299"/>
    </location>
</feature>
<feature type="strand" evidence="23">
    <location>
        <begin position="300"/>
        <end position="302"/>
    </location>
</feature>
<feature type="helix" evidence="23">
    <location>
        <begin position="304"/>
        <end position="307"/>
    </location>
</feature>
<feature type="helix" evidence="23">
    <location>
        <begin position="311"/>
        <end position="313"/>
    </location>
</feature>
<feature type="strand" evidence="23">
    <location>
        <begin position="314"/>
        <end position="316"/>
    </location>
</feature>
<feature type="helix" evidence="23">
    <location>
        <begin position="318"/>
        <end position="320"/>
    </location>
</feature>
<feature type="strand" evidence="23">
    <location>
        <begin position="321"/>
        <end position="323"/>
    </location>
</feature>
<feature type="strand" evidence="23">
    <location>
        <begin position="325"/>
        <end position="328"/>
    </location>
</feature>
<feature type="strand" evidence="23">
    <location>
        <begin position="331"/>
        <end position="333"/>
    </location>
</feature>
<feature type="turn" evidence="23">
    <location>
        <begin position="335"/>
        <end position="337"/>
    </location>
</feature>
<feature type="helix" evidence="23">
    <location>
        <begin position="342"/>
        <end position="350"/>
    </location>
</feature>
<feature type="strand" evidence="23">
    <location>
        <begin position="355"/>
        <end position="361"/>
    </location>
</feature>
<feature type="strand" evidence="23">
    <location>
        <begin position="369"/>
        <end position="371"/>
    </location>
</feature>
<feature type="helix" evidence="23">
    <location>
        <begin position="382"/>
        <end position="392"/>
    </location>
</feature>
<feature type="strand" evidence="23">
    <location>
        <begin position="401"/>
        <end position="407"/>
    </location>
</feature>
<feature type="helix" evidence="23">
    <location>
        <begin position="411"/>
        <end position="425"/>
    </location>
</feature>
<feature type="helix" evidence="23">
    <location>
        <begin position="426"/>
        <end position="428"/>
    </location>
</feature>
<feature type="helix" evidence="23">
    <location>
        <begin position="445"/>
        <end position="447"/>
    </location>
</feature>
<feature type="strand" evidence="23">
    <location>
        <begin position="451"/>
        <end position="454"/>
    </location>
</feature>
<feature type="strand" evidence="22">
    <location>
        <begin position="478"/>
        <end position="485"/>
    </location>
</feature>
<feature type="turn" evidence="23">
    <location>
        <begin position="486"/>
        <end position="489"/>
    </location>
</feature>
<feature type="strand" evidence="23">
    <location>
        <begin position="490"/>
        <end position="499"/>
    </location>
</feature>
<feature type="strand" evidence="23">
    <location>
        <begin position="502"/>
        <end position="507"/>
    </location>
</feature>
<feature type="helix" evidence="23">
    <location>
        <begin position="640"/>
        <end position="642"/>
    </location>
</feature>
<feature type="helix" evidence="23">
    <location>
        <begin position="653"/>
        <end position="661"/>
    </location>
</feature>
<feature type="strand" evidence="23">
    <location>
        <begin position="668"/>
        <end position="673"/>
    </location>
</feature>
<feature type="strand" evidence="23">
    <location>
        <begin position="680"/>
        <end position="686"/>
    </location>
</feature>
<feature type="strand" evidence="23">
    <location>
        <begin position="689"/>
        <end position="698"/>
    </location>
</feature>
<feature type="strand" evidence="23">
    <location>
        <begin position="701"/>
        <end position="704"/>
    </location>
</feature>
<feature type="turn" evidence="23">
    <location>
        <begin position="705"/>
        <end position="707"/>
    </location>
</feature>
<feature type="strand" evidence="23">
    <location>
        <begin position="708"/>
        <end position="711"/>
    </location>
</feature>
<feature type="helix" evidence="23">
    <location>
        <begin position="713"/>
        <end position="722"/>
    </location>
</feature>
<feature type="helix" evidence="23">
    <location>
        <begin position="737"/>
        <end position="749"/>
    </location>
</feature>
<feature type="turn" evidence="23">
    <location>
        <begin position="750"/>
        <end position="752"/>
    </location>
</feature>
<feature type="helix" evidence="23">
    <location>
        <begin position="755"/>
        <end position="758"/>
    </location>
</feature>
<feature type="turn" evidence="23">
    <location>
        <begin position="762"/>
        <end position="765"/>
    </location>
</feature>
<feature type="strand" evidence="23">
    <location>
        <begin position="773"/>
        <end position="778"/>
    </location>
</feature>
<feature type="strand" evidence="23">
    <location>
        <begin position="783"/>
        <end position="787"/>
    </location>
</feature>
<feature type="strand" evidence="23">
    <location>
        <begin position="795"/>
        <end position="800"/>
    </location>
</feature>
<feature type="strand" evidence="23">
    <location>
        <begin position="803"/>
        <end position="811"/>
    </location>
</feature>
<feature type="turn" evidence="22">
    <location>
        <begin position="815"/>
        <end position="817"/>
    </location>
</feature>
<feature type="strand" evidence="22">
    <location>
        <begin position="818"/>
        <end position="825"/>
    </location>
</feature>
<feature type="strand" evidence="22">
    <location>
        <begin position="828"/>
        <end position="831"/>
    </location>
</feature>
<feature type="helix" evidence="22">
    <location>
        <begin position="835"/>
        <end position="840"/>
    </location>
</feature>
<feature type="helix" evidence="23">
    <location>
        <begin position="846"/>
        <end position="848"/>
    </location>
</feature>
<feature type="strand" evidence="22">
    <location>
        <begin position="850"/>
        <end position="854"/>
    </location>
</feature>
<feature type="helix" evidence="22">
    <location>
        <begin position="855"/>
        <end position="857"/>
    </location>
</feature>
<feature type="strand" evidence="22">
    <location>
        <begin position="858"/>
        <end position="862"/>
    </location>
</feature>
<feature type="strand" evidence="21">
    <location>
        <begin position="867"/>
        <end position="869"/>
    </location>
</feature>
<feature type="strand" evidence="22">
    <location>
        <begin position="870"/>
        <end position="882"/>
    </location>
</feature>
<feature type="strand" evidence="22">
    <location>
        <begin position="886"/>
        <end position="892"/>
    </location>
</feature>
<feature type="helix" evidence="22">
    <location>
        <begin position="893"/>
        <end position="907"/>
    </location>
</feature>
<feature type="helix" evidence="23">
    <location>
        <begin position="928"/>
        <end position="931"/>
    </location>
</feature>
<feature type="strand" evidence="23">
    <location>
        <begin position="954"/>
        <end position="959"/>
    </location>
</feature>
<feature type="helix" evidence="23">
    <location>
        <begin position="960"/>
        <end position="969"/>
    </location>
</feature>
<feature type="helix" evidence="23">
    <location>
        <begin position="971"/>
        <end position="980"/>
    </location>
</feature>
<feature type="strand" evidence="23">
    <location>
        <begin position="981"/>
        <end position="986"/>
    </location>
</feature>
<feature type="helix" evidence="23">
    <location>
        <begin position="1000"/>
        <end position="1004"/>
    </location>
</feature>
<feature type="strand" evidence="23">
    <location>
        <begin position="1008"/>
        <end position="1010"/>
    </location>
</feature>
<feature type="helix" evidence="23">
    <location>
        <begin position="1019"/>
        <end position="1027"/>
    </location>
</feature>
<feature type="helix" evidence="23">
    <location>
        <begin position="1031"/>
        <end position="1033"/>
    </location>
</feature>
<feature type="strand" evidence="23">
    <location>
        <begin position="1035"/>
        <end position="1038"/>
    </location>
</feature>
<feature type="helix" evidence="23">
    <location>
        <begin position="1041"/>
        <end position="1044"/>
    </location>
</feature>
<feature type="helix" evidence="23">
    <location>
        <begin position="1054"/>
        <end position="1056"/>
    </location>
</feature>
<feature type="strand" evidence="23">
    <location>
        <begin position="1061"/>
        <end position="1071"/>
    </location>
</feature>
<feature type="strand" evidence="23">
    <location>
        <begin position="1077"/>
        <end position="1079"/>
    </location>
</feature>
<feature type="strand" evidence="23">
    <location>
        <begin position="1083"/>
        <end position="1091"/>
    </location>
</feature>
<feature type="strand" evidence="23">
    <location>
        <begin position="1095"/>
        <end position="1100"/>
    </location>
</feature>
<feature type="strand" evidence="23">
    <location>
        <begin position="1105"/>
        <end position="1110"/>
    </location>
</feature>
<feature type="turn" evidence="23">
    <location>
        <begin position="1114"/>
        <end position="1116"/>
    </location>
</feature>
<feature type="strand" evidence="23">
    <location>
        <begin position="1120"/>
        <end position="1125"/>
    </location>
</feature>
<feature type="helix" evidence="23">
    <location>
        <begin position="1127"/>
        <end position="1129"/>
    </location>
</feature>
<feature type="strand" evidence="23">
    <location>
        <begin position="1131"/>
        <end position="1139"/>
    </location>
</feature>
<feature type="strand" evidence="23">
    <location>
        <begin position="1145"/>
        <end position="1154"/>
    </location>
</feature>
<feature type="helix" evidence="23">
    <location>
        <begin position="1155"/>
        <end position="1157"/>
    </location>
</feature>
<feature type="strand" evidence="23">
    <location>
        <begin position="1161"/>
        <end position="1168"/>
    </location>
</feature>
<feature type="strand" evidence="23">
    <location>
        <begin position="1174"/>
        <end position="1187"/>
    </location>
</feature>
<dbReference type="EC" id="3.1.4.11" evidence="13"/>
<dbReference type="EMBL" id="M37238">
    <property type="protein sequence ID" value="AAA60112.1"/>
    <property type="status" value="ALT_FRAME"/>
    <property type="molecule type" value="mRNA"/>
</dbReference>
<dbReference type="EMBL" id="X14034">
    <property type="protein sequence ID" value="CAA32194.1"/>
    <property type="status" value="ALT_FRAME"/>
    <property type="molecule type" value="mRNA"/>
</dbReference>
<dbReference type="EMBL" id="AB208914">
    <property type="protein sequence ID" value="BAD92151.1"/>
    <property type="status" value="ALT_INIT"/>
    <property type="molecule type" value="mRNA"/>
</dbReference>
<dbReference type="EMBL" id="AY364256">
    <property type="protein sequence ID" value="AAQ76815.1"/>
    <property type="status" value="ALT_FRAME"/>
    <property type="molecule type" value="mRNA"/>
</dbReference>
<dbReference type="EMBL" id="AC092142">
    <property type="status" value="NOT_ANNOTATED_CDS"/>
    <property type="molecule type" value="Genomic_DNA"/>
</dbReference>
<dbReference type="EMBL" id="AC098966">
    <property type="status" value="NOT_ANNOTATED_CDS"/>
    <property type="molecule type" value="Genomic_DNA"/>
</dbReference>
<dbReference type="EMBL" id="AC099524">
    <property type="status" value="NOT_ANNOTATED_CDS"/>
    <property type="molecule type" value="Genomic_DNA"/>
</dbReference>
<dbReference type="EMBL" id="CH471114">
    <property type="protein sequence ID" value="EAW95524.1"/>
    <property type="molecule type" value="Genomic_DNA"/>
</dbReference>
<dbReference type="EMBL" id="CH471114">
    <property type="protein sequence ID" value="EAW95525.1"/>
    <property type="molecule type" value="Genomic_DNA"/>
</dbReference>
<dbReference type="EMBL" id="BC007565">
    <property type="protein sequence ID" value="AAH07565.1"/>
    <property type="molecule type" value="mRNA"/>
</dbReference>
<dbReference type="EMBL" id="BC011772">
    <property type="protein sequence ID" value="AAH11772.1"/>
    <property type="molecule type" value="mRNA"/>
</dbReference>
<dbReference type="EMBL" id="BC014561">
    <property type="protein sequence ID" value="AAH14561.1"/>
    <property type="molecule type" value="mRNA"/>
</dbReference>
<dbReference type="EMBL" id="BC018646">
    <property type="protein sequence ID" value="AAH18646.1"/>
    <property type="molecule type" value="mRNA"/>
</dbReference>
<dbReference type="CCDS" id="CCDS42204.1"/>
<dbReference type="PIR" id="S02004">
    <property type="entry name" value="S02004"/>
</dbReference>
<dbReference type="RefSeq" id="NP_001412678.1">
    <property type="nucleotide sequence ID" value="NM_001425749.1"/>
</dbReference>
<dbReference type="RefSeq" id="NP_001412679.1">
    <property type="nucleotide sequence ID" value="NM_001425750.1"/>
</dbReference>
<dbReference type="RefSeq" id="NP_001412680.1">
    <property type="nucleotide sequence ID" value="NM_001425751.1"/>
</dbReference>
<dbReference type="RefSeq" id="NP_002652.2">
    <property type="nucleotide sequence ID" value="NM_002661.5"/>
</dbReference>
<dbReference type="PDB" id="2K2J">
    <property type="method" value="NMR"/>
    <property type="chains" value="A=471-514, A=841-913"/>
</dbReference>
<dbReference type="PDB" id="2W2W">
    <property type="method" value="X-ray"/>
    <property type="resolution" value="2.80 A"/>
    <property type="chains" value="A/B/C/D/E/F/G/H/I/J/K/L=471-514, A/B/C/D/E/F/G/H/I/J/K/L=841-913"/>
</dbReference>
<dbReference type="PDB" id="2W2X">
    <property type="method" value="X-ray"/>
    <property type="resolution" value="2.30 A"/>
    <property type="chains" value="C/D=471-514, C/D=841-913"/>
</dbReference>
<dbReference type="PDB" id="8JQG">
    <property type="method" value="EM"/>
    <property type="resolution" value="3.72 A"/>
    <property type="chains" value="A=1-1265"/>
</dbReference>
<dbReference type="PDB" id="8JQH">
    <property type="method" value="EM"/>
    <property type="resolution" value="4.20 A"/>
    <property type="chains" value="A=1-1265"/>
</dbReference>
<dbReference type="PDB" id="8JQI">
    <property type="method" value="EM"/>
    <property type="resolution" value="4.10 A"/>
    <property type="chains" value="A=1-1265"/>
</dbReference>
<dbReference type="PDB" id="8T7C">
    <property type="method" value="X-ray"/>
    <property type="resolution" value="2.55 A"/>
    <property type="chains" value="A=14-221, A=239-1190"/>
</dbReference>
<dbReference type="PDBsum" id="2K2J"/>
<dbReference type="PDBsum" id="2W2W"/>
<dbReference type="PDBsum" id="2W2X"/>
<dbReference type="PDBsum" id="8JQG"/>
<dbReference type="PDBsum" id="8JQH"/>
<dbReference type="PDBsum" id="8JQI"/>
<dbReference type="PDBsum" id="8T7C"/>
<dbReference type="BMRB" id="P16885"/>
<dbReference type="EMDB" id="EMD-36571"/>
<dbReference type="EMDB" id="EMD-36572"/>
<dbReference type="EMDB" id="EMD-36573"/>
<dbReference type="SMR" id="P16885"/>
<dbReference type="BioGRID" id="111352">
    <property type="interactions" value="80"/>
</dbReference>
<dbReference type="CORUM" id="P16885"/>
<dbReference type="FunCoup" id="P16885">
    <property type="interactions" value="1634"/>
</dbReference>
<dbReference type="IntAct" id="P16885">
    <property type="interactions" value="74"/>
</dbReference>
<dbReference type="MINT" id="P16885"/>
<dbReference type="STRING" id="9606.ENSP00000482457"/>
<dbReference type="BindingDB" id="P16885"/>
<dbReference type="ChEMBL" id="CHEMBL4100"/>
<dbReference type="GuidetoPHARMACOLOGY" id="1408"/>
<dbReference type="SwissLipids" id="SLP:000000647"/>
<dbReference type="MoonDB" id="P16885">
    <property type="type" value="Predicted"/>
</dbReference>
<dbReference type="GlyGen" id="P16885">
    <property type="glycosylation" value="1 site, 1 O-linked glycan (1 site)"/>
</dbReference>
<dbReference type="iPTMnet" id="P16885"/>
<dbReference type="PhosphoSitePlus" id="P16885"/>
<dbReference type="BioMuta" id="PLCG2"/>
<dbReference type="DMDM" id="215274231"/>
<dbReference type="jPOST" id="P16885"/>
<dbReference type="MassIVE" id="P16885"/>
<dbReference type="PaxDb" id="9606-ENSP00000482457"/>
<dbReference type="PeptideAtlas" id="P16885"/>
<dbReference type="ProteomicsDB" id="53400"/>
<dbReference type="Pumba" id="P16885"/>
<dbReference type="Antibodypedia" id="3797">
    <property type="antibodies" value="1040 antibodies from 43 providers"/>
</dbReference>
<dbReference type="DNASU" id="5336"/>
<dbReference type="YCharOS" id="P16885">
    <property type="antibodies" value="Tested 11 antibodies from 6 manufacturers"/>
</dbReference>
<dbReference type="Ensembl" id="ENST00000564138.6">
    <property type="protein sequence ID" value="ENSP00000482457.1"/>
    <property type="gene ID" value="ENSG00000197943.13"/>
</dbReference>
<dbReference type="Ensembl" id="ENST00000565054.7">
    <property type="protein sequence ID" value="ENSP00000520638.1"/>
    <property type="gene ID" value="ENSG00000197943.13"/>
</dbReference>
<dbReference type="Ensembl" id="ENST00000697580.2">
    <property type="protein sequence ID" value="ENSP00000520637.1"/>
    <property type="gene ID" value="ENSG00000197943.13"/>
</dbReference>
<dbReference type="GeneID" id="5336"/>
<dbReference type="KEGG" id="hsa:5336"/>
<dbReference type="MANE-Select" id="ENST00000564138.6">
    <property type="protein sequence ID" value="ENSP00000482457.1"/>
    <property type="RefSeq nucleotide sequence ID" value="NM_002661.5"/>
    <property type="RefSeq protein sequence ID" value="NP_002652.2"/>
</dbReference>
<dbReference type="UCSC" id="uc002fgt.4">
    <property type="organism name" value="human"/>
</dbReference>
<dbReference type="AGR" id="HGNC:9066"/>
<dbReference type="CTD" id="5336"/>
<dbReference type="DisGeNET" id="5336"/>
<dbReference type="GeneCards" id="PLCG2"/>
<dbReference type="HGNC" id="HGNC:9066">
    <property type="gene designation" value="PLCG2"/>
</dbReference>
<dbReference type="HPA" id="ENSG00000197943">
    <property type="expression patterns" value="Tissue enhanced (lymphoid)"/>
</dbReference>
<dbReference type="MalaCards" id="PLCG2"/>
<dbReference type="MIM" id="600220">
    <property type="type" value="gene"/>
</dbReference>
<dbReference type="MIM" id="614468">
    <property type="type" value="phenotype"/>
</dbReference>
<dbReference type="MIM" id="614878">
    <property type="type" value="phenotype"/>
</dbReference>
<dbReference type="neXtProt" id="NX_P16885"/>
<dbReference type="NIAGADS" id="ENSG00000197943"/>
<dbReference type="OpenTargets" id="ENSG00000197943"/>
<dbReference type="Orphanet" id="324530">
    <property type="disease" value="Autoinflammation-PLCG2-associated antibody deficiency-immune dysregulation"/>
</dbReference>
<dbReference type="Orphanet" id="300359">
    <property type="disease" value="PLCG2-associated antibody deficiency and immune dysregulation"/>
</dbReference>
<dbReference type="PharmGKB" id="PA33393"/>
<dbReference type="VEuPathDB" id="HostDB:ENSG00000197943"/>
<dbReference type="eggNOG" id="KOG1264">
    <property type="taxonomic scope" value="Eukaryota"/>
</dbReference>
<dbReference type="GeneTree" id="ENSGT00940000157517"/>
<dbReference type="HOGENOM" id="CLU_002738_5_1_1"/>
<dbReference type="InParanoid" id="P16885"/>
<dbReference type="OMA" id="YMARVFK"/>
<dbReference type="OrthoDB" id="269822at2759"/>
<dbReference type="PAN-GO" id="P16885">
    <property type="GO annotations" value="1 GO annotation based on evolutionary models"/>
</dbReference>
<dbReference type="PhylomeDB" id="P16885"/>
<dbReference type="TreeFam" id="TF313216"/>
<dbReference type="BioCyc" id="MetaCyc:HS06773-MONOMER"/>
<dbReference type="BRENDA" id="3.1.4.11">
    <property type="organism ID" value="2681"/>
</dbReference>
<dbReference type="PathwayCommons" id="P16885"/>
<dbReference type="Reactome" id="R-HSA-114604">
    <property type="pathway name" value="GPVI-mediated activation cascade"/>
</dbReference>
<dbReference type="Reactome" id="R-HSA-166016">
    <property type="pathway name" value="Toll Like Receptor 4 (TLR4) Cascade"/>
</dbReference>
<dbReference type="Reactome" id="R-HSA-1855204">
    <property type="pathway name" value="Synthesis of IP3 and IP4 in the cytosol"/>
</dbReference>
<dbReference type="Reactome" id="R-HSA-202433">
    <property type="pathway name" value="Generation of second messenger molecules"/>
</dbReference>
<dbReference type="Reactome" id="R-HSA-2029485">
    <property type="pathway name" value="Role of phospholipids in phagocytosis"/>
</dbReference>
<dbReference type="Reactome" id="R-HSA-2424491">
    <property type="pathway name" value="DAP12 signaling"/>
</dbReference>
<dbReference type="Reactome" id="R-HSA-2871796">
    <property type="pathway name" value="FCERI mediated MAPK activation"/>
</dbReference>
<dbReference type="Reactome" id="R-HSA-2871809">
    <property type="pathway name" value="FCERI mediated Ca+2 mobilization"/>
</dbReference>
<dbReference type="Reactome" id="R-HSA-5607764">
    <property type="pathway name" value="CLEC7A (Dectin-1) signaling"/>
</dbReference>
<dbReference type="Reactome" id="R-HSA-5621480">
    <property type="pathway name" value="Dectin-2 family"/>
</dbReference>
<dbReference type="Reactome" id="R-HSA-9027277">
    <property type="pathway name" value="Erythropoietin activates Phospholipase C gamma (PLCG)"/>
</dbReference>
<dbReference type="Reactome" id="R-HSA-9664323">
    <property type="pathway name" value="FCGR3A-mediated IL10 synthesis"/>
</dbReference>
<dbReference type="Reactome" id="R-HSA-9679191">
    <property type="pathway name" value="Potential therapeutics for SARS"/>
</dbReference>
<dbReference type="Reactome" id="R-HSA-9680350">
    <property type="pathway name" value="Signaling by CSF1 (M-CSF) in myeloid cells"/>
</dbReference>
<dbReference type="Reactome" id="R-HSA-983695">
    <property type="pathway name" value="Antigen activates B Cell Receptor (BCR) leading to generation of second messengers"/>
</dbReference>
<dbReference type="SignaLink" id="P16885"/>
<dbReference type="SIGNOR" id="P16885"/>
<dbReference type="BioGRID-ORCS" id="5336">
    <property type="hits" value="15 hits in 1164 CRISPR screens"/>
</dbReference>
<dbReference type="ChiTaRS" id="PLCG2">
    <property type="organism name" value="human"/>
</dbReference>
<dbReference type="EvolutionaryTrace" id="P16885"/>
<dbReference type="GeneWiki" id="PLCG2"/>
<dbReference type="GenomeRNAi" id="5336"/>
<dbReference type="Pharos" id="P16885">
    <property type="development level" value="Tchem"/>
</dbReference>
<dbReference type="PRO" id="PR:P16885"/>
<dbReference type="Proteomes" id="UP000005640">
    <property type="component" value="Chromosome 16"/>
</dbReference>
<dbReference type="RNAct" id="P16885">
    <property type="molecule type" value="protein"/>
</dbReference>
<dbReference type="Bgee" id="ENSG00000197943">
    <property type="expression patterns" value="Expressed in renal glomerulus and 161 other cell types or tissues"/>
</dbReference>
<dbReference type="ExpressionAtlas" id="P16885">
    <property type="expression patterns" value="baseline and differential"/>
</dbReference>
<dbReference type="GO" id="GO:0005737">
    <property type="term" value="C:cytoplasm"/>
    <property type="evidence" value="ECO:0000314"/>
    <property type="project" value="ARUK-UCL"/>
</dbReference>
<dbReference type="GO" id="GO:0005829">
    <property type="term" value="C:cytosol"/>
    <property type="evidence" value="ECO:0000304"/>
    <property type="project" value="Reactome"/>
</dbReference>
<dbReference type="GO" id="GO:0070062">
    <property type="term" value="C:extracellular exosome"/>
    <property type="evidence" value="ECO:0007005"/>
    <property type="project" value="UniProtKB"/>
</dbReference>
<dbReference type="GO" id="GO:0097708">
    <property type="term" value="C:intracellular vesicle"/>
    <property type="evidence" value="ECO:0000314"/>
    <property type="project" value="ARUK-UCL"/>
</dbReference>
<dbReference type="GO" id="GO:0045121">
    <property type="term" value="C:membrane raft"/>
    <property type="evidence" value="ECO:0000250"/>
    <property type="project" value="UniProtKB"/>
</dbReference>
<dbReference type="GO" id="GO:0048471">
    <property type="term" value="C:perinuclear region of cytoplasm"/>
    <property type="evidence" value="ECO:0000314"/>
    <property type="project" value="ARUK-UCL"/>
</dbReference>
<dbReference type="GO" id="GO:0005886">
    <property type="term" value="C:plasma membrane"/>
    <property type="evidence" value="ECO:0000314"/>
    <property type="project" value="UniProtKB"/>
</dbReference>
<dbReference type="GO" id="GO:0032587">
    <property type="term" value="C:ruffle membrane"/>
    <property type="evidence" value="ECO:0000314"/>
    <property type="project" value="ARUK-UCL"/>
</dbReference>
<dbReference type="GO" id="GO:0004435">
    <property type="term" value="F:phosphatidylinositol-4,5-bisphosphate phospholipase C activity"/>
    <property type="evidence" value="ECO:0000314"/>
    <property type="project" value="UniProtKB"/>
</dbReference>
<dbReference type="GO" id="GO:0004629">
    <property type="term" value="F:phospholipase C activity"/>
    <property type="evidence" value="ECO:0000304"/>
    <property type="project" value="Reactome"/>
</dbReference>
<dbReference type="GO" id="GO:0140031">
    <property type="term" value="F:phosphorylation-dependent protein binding"/>
    <property type="evidence" value="ECO:0007669"/>
    <property type="project" value="Ensembl"/>
</dbReference>
<dbReference type="GO" id="GO:0001784">
    <property type="term" value="F:phosphotyrosine residue binding"/>
    <property type="evidence" value="ECO:0000353"/>
    <property type="project" value="CAFA"/>
</dbReference>
<dbReference type="GO" id="GO:0019901">
    <property type="term" value="F:protein kinase binding"/>
    <property type="evidence" value="ECO:0000353"/>
    <property type="project" value="ARUK-UCL"/>
</dbReference>
<dbReference type="GO" id="GO:1990782">
    <property type="term" value="F:protein tyrosine kinase binding"/>
    <property type="evidence" value="ECO:0000353"/>
    <property type="project" value="ARUK-UCL"/>
</dbReference>
<dbReference type="GO" id="GO:0097110">
    <property type="term" value="F:scaffold protein binding"/>
    <property type="evidence" value="ECO:0000353"/>
    <property type="project" value="ARUK-UCL"/>
</dbReference>
<dbReference type="GO" id="GO:0061760">
    <property type="term" value="P:antifungal innate immune response"/>
    <property type="evidence" value="ECO:0000250"/>
    <property type="project" value="ARUK-UCL"/>
</dbReference>
<dbReference type="GO" id="GO:0042113">
    <property type="term" value="P:B cell activation"/>
    <property type="evidence" value="ECO:0000314"/>
    <property type="project" value="UniProt"/>
</dbReference>
<dbReference type="GO" id="GO:0030183">
    <property type="term" value="P:B cell differentiation"/>
    <property type="evidence" value="ECO:0000250"/>
    <property type="project" value="UniProtKB"/>
</dbReference>
<dbReference type="GO" id="GO:0050853">
    <property type="term" value="P:B cell receptor signaling pathway"/>
    <property type="evidence" value="ECO:0000314"/>
    <property type="project" value="ARUK-UCL"/>
</dbReference>
<dbReference type="GO" id="GO:0019722">
    <property type="term" value="P:calcium-mediated signaling"/>
    <property type="evidence" value="ECO:0000315"/>
    <property type="project" value="ARUK-UCL"/>
</dbReference>
<dbReference type="GO" id="GO:0001775">
    <property type="term" value="P:cell activation"/>
    <property type="evidence" value="ECO:0000250"/>
    <property type="project" value="ARUK-UCL"/>
</dbReference>
<dbReference type="GO" id="GO:0071277">
    <property type="term" value="P:cellular response to calcium ion"/>
    <property type="evidence" value="ECO:0000315"/>
    <property type="project" value="ARUK-UCL"/>
</dbReference>
<dbReference type="GO" id="GO:1990858">
    <property type="term" value="P:cellular response to lectin"/>
    <property type="evidence" value="ECO:0000250"/>
    <property type="project" value="ARUK-UCL"/>
</dbReference>
<dbReference type="GO" id="GO:0071396">
    <property type="term" value="P:cellular response to lipid"/>
    <property type="evidence" value="ECO:0000315"/>
    <property type="project" value="ARUK-UCL"/>
</dbReference>
<dbReference type="GO" id="GO:0038095">
    <property type="term" value="P:Fc-epsilon receptor signaling pathway"/>
    <property type="evidence" value="ECO:0000304"/>
    <property type="project" value="Reactome"/>
</dbReference>
<dbReference type="GO" id="GO:0002316">
    <property type="term" value="P:follicular B cell differentiation"/>
    <property type="evidence" value="ECO:0007669"/>
    <property type="project" value="Ensembl"/>
</dbReference>
<dbReference type="GO" id="GO:0032959">
    <property type="term" value="P:inositol trisphosphate biosynthetic process"/>
    <property type="evidence" value="ECO:0007669"/>
    <property type="project" value="Ensembl"/>
</dbReference>
<dbReference type="GO" id="GO:0035556">
    <property type="term" value="P:intracellular signal transduction"/>
    <property type="evidence" value="ECO:0000314"/>
    <property type="project" value="ARUK-UCL"/>
</dbReference>
<dbReference type="GO" id="GO:0031663">
    <property type="term" value="P:lipopolysaccharide-mediated signaling pathway"/>
    <property type="evidence" value="ECO:0000315"/>
    <property type="project" value="ARUK-UCL"/>
</dbReference>
<dbReference type="GO" id="GO:0002281">
    <property type="term" value="P:macrophage activation involved in immune response"/>
    <property type="evidence" value="ECO:0000250"/>
    <property type="project" value="ARUK-UCL"/>
</dbReference>
<dbReference type="GO" id="GO:0043069">
    <property type="term" value="P:negative regulation of programmed cell death"/>
    <property type="evidence" value="ECO:0007669"/>
    <property type="project" value="Ensembl"/>
</dbReference>
<dbReference type="GO" id="GO:0006661">
    <property type="term" value="P:phosphatidylinositol biosynthetic process"/>
    <property type="evidence" value="ECO:0000314"/>
    <property type="project" value="UniProtKB"/>
</dbReference>
<dbReference type="GO" id="GO:0046488">
    <property type="term" value="P:phosphatidylinositol metabolic process"/>
    <property type="evidence" value="ECO:0000318"/>
    <property type="project" value="GO_Central"/>
</dbReference>
<dbReference type="GO" id="GO:0048015">
    <property type="term" value="P:phosphatidylinositol-mediated signaling"/>
    <property type="evidence" value="ECO:0000318"/>
    <property type="project" value="GO_Central"/>
</dbReference>
<dbReference type="GO" id="GO:0009395">
    <property type="term" value="P:phospholipid catabolic process"/>
    <property type="evidence" value="ECO:0007669"/>
    <property type="project" value="InterPro"/>
</dbReference>
<dbReference type="GO" id="GO:0030168">
    <property type="term" value="P:platelet activation"/>
    <property type="evidence" value="ECO:0000304"/>
    <property type="project" value="Reactome"/>
</dbReference>
<dbReference type="GO" id="GO:0050850">
    <property type="term" value="P:positive regulation of calcium-mediated signaling"/>
    <property type="evidence" value="ECO:0000250"/>
    <property type="project" value="ARUK-UCL"/>
</dbReference>
<dbReference type="GO" id="GO:0043123">
    <property type="term" value="P:positive regulation of canonical NF-kappaB signal transduction"/>
    <property type="evidence" value="ECO:0000250"/>
    <property type="project" value="ARUK-UCL"/>
</dbReference>
<dbReference type="GO" id="GO:1902808">
    <property type="term" value="P:positive regulation of cell cycle G1/S phase transition"/>
    <property type="evidence" value="ECO:0000250"/>
    <property type="project" value="ARUK-UCL"/>
</dbReference>
<dbReference type="GO" id="GO:0002732">
    <property type="term" value="P:positive regulation of dendritic cell cytokine production"/>
    <property type="evidence" value="ECO:0000250"/>
    <property type="project" value="ARUK-UCL"/>
</dbReference>
<dbReference type="GO" id="GO:0010634">
    <property type="term" value="P:positive regulation of epithelial cell migration"/>
    <property type="evidence" value="ECO:0000318"/>
    <property type="project" value="GO_Central"/>
</dbReference>
<dbReference type="GO" id="GO:0010628">
    <property type="term" value="P:positive regulation of gene expression"/>
    <property type="evidence" value="ECO:0000315"/>
    <property type="project" value="ARUK-UCL"/>
</dbReference>
<dbReference type="GO" id="GO:0032733">
    <property type="term" value="P:positive regulation of interleukin-10 production"/>
    <property type="evidence" value="ECO:0000250"/>
    <property type="project" value="ARUK-UCL"/>
</dbReference>
<dbReference type="GO" id="GO:0032735">
    <property type="term" value="P:positive regulation of interleukin-12 production"/>
    <property type="evidence" value="ECO:0000250"/>
    <property type="project" value="ARUK-UCL"/>
</dbReference>
<dbReference type="GO" id="GO:0032743">
    <property type="term" value="P:positive regulation of interleukin-2 production"/>
    <property type="evidence" value="ECO:0000250"/>
    <property type="project" value="ARUK-UCL"/>
</dbReference>
<dbReference type="GO" id="GO:0032747">
    <property type="term" value="P:positive regulation of interleukin-23 production"/>
    <property type="evidence" value="ECO:0000250"/>
    <property type="project" value="ARUK-UCL"/>
</dbReference>
<dbReference type="GO" id="GO:0032755">
    <property type="term" value="P:positive regulation of interleukin-6 production"/>
    <property type="evidence" value="ECO:0000250"/>
    <property type="project" value="ARUK-UCL"/>
</dbReference>
<dbReference type="GO" id="GO:1902533">
    <property type="term" value="P:positive regulation of intracellular signal transduction"/>
    <property type="evidence" value="ECO:0000250"/>
    <property type="project" value="ARUK-UCL"/>
</dbReference>
<dbReference type="GO" id="GO:0060907">
    <property type="term" value="P:positive regulation of macrophage cytokine production"/>
    <property type="evidence" value="ECO:0000250"/>
    <property type="project" value="ARUK-UCL"/>
</dbReference>
<dbReference type="GO" id="GO:0043410">
    <property type="term" value="P:positive regulation of MAPK cascade"/>
    <property type="evidence" value="ECO:0000250"/>
    <property type="project" value="ARUK-UCL"/>
</dbReference>
<dbReference type="GO" id="GO:0150078">
    <property type="term" value="P:positive regulation of neuroinflammatory response"/>
    <property type="evidence" value="ECO:0000315"/>
    <property type="project" value="ARUK-UCL"/>
</dbReference>
<dbReference type="GO" id="GO:1900227">
    <property type="term" value="P:positive regulation of NLRP3 inflammasome complex assembly"/>
    <property type="evidence" value="ECO:0000315"/>
    <property type="project" value="ARUK-UCL"/>
</dbReference>
<dbReference type="GO" id="GO:0060100">
    <property type="term" value="P:positive regulation of phagocytosis, engulfment"/>
    <property type="evidence" value="ECO:0000315"/>
    <property type="project" value="ARUK-UCL"/>
</dbReference>
<dbReference type="GO" id="GO:1903428">
    <property type="term" value="P:positive regulation of reactive oxygen species biosynthetic process"/>
    <property type="evidence" value="ECO:0000250"/>
    <property type="project" value="ARUK-UCL"/>
</dbReference>
<dbReference type="GO" id="GO:0002092">
    <property type="term" value="P:positive regulation of receptor internalization"/>
    <property type="evidence" value="ECO:0007669"/>
    <property type="project" value="Ensembl"/>
</dbReference>
<dbReference type="GO" id="GO:0032760">
    <property type="term" value="P:positive regulation of tumor necrosis factor production"/>
    <property type="evidence" value="ECO:0000250"/>
    <property type="project" value="ARUK-UCL"/>
</dbReference>
<dbReference type="GO" id="GO:0032481">
    <property type="term" value="P:positive regulation of type I interferon production"/>
    <property type="evidence" value="ECO:0007669"/>
    <property type="project" value="Ensembl"/>
</dbReference>
<dbReference type="GO" id="GO:0012501">
    <property type="term" value="P:programmed cell death"/>
    <property type="evidence" value="ECO:0007669"/>
    <property type="project" value="Ensembl"/>
</dbReference>
<dbReference type="GO" id="GO:0070884">
    <property type="term" value="P:regulation of calcineurin-NFAT signaling cascade"/>
    <property type="evidence" value="ECO:0000250"/>
    <property type="project" value="ARUK-UCL"/>
</dbReference>
<dbReference type="GO" id="GO:0043122">
    <property type="term" value="P:regulation of canonical NF-kappaB signal transduction"/>
    <property type="evidence" value="ECO:0000250"/>
    <property type="project" value="ARUK-UCL"/>
</dbReference>
<dbReference type="GO" id="GO:0019216">
    <property type="term" value="P:regulation of lipid metabolic process"/>
    <property type="evidence" value="ECO:0000315"/>
    <property type="project" value="ARUK-UCL"/>
</dbReference>
<dbReference type="GO" id="GO:0051209">
    <property type="term" value="P:release of sequestered calcium ion into cytosol"/>
    <property type="evidence" value="ECO:0000314"/>
    <property type="project" value="UniProtKB"/>
</dbReference>
<dbReference type="GO" id="GO:0048678">
    <property type="term" value="P:response to axon injury"/>
    <property type="evidence" value="ECO:0000315"/>
    <property type="project" value="ARUK-UCL"/>
</dbReference>
<dbReference type="GO" id="GO:0001878">
    <property type="term" value="P:response to yeast"/>
    <property type="evidence" value="ECO:0000250"/>
    <property type="project" value="ARUK-UCL"/>
</dbReference>
<dbReference type="GO" id="GO:0002223">
    <property type="term" value="P:stimulatory C-type lectin receptor signaling pathway"/>
    <property type="evidence" value="ECO:0000250"/>
    <property type="project" value="ARUK-UCL"/>
</dbReference>
<dbReference type="GO" id="GO:0050852">
    <property type="term" value="P:T cell receptor signaling pathway"/>
    <property type="evidence" value="ECO:0000250"/>
    <property type="project" value="UniProtKB"/>
</dbReference>
<dbReference type="GO" id="GO:0002224">
    <property type="term" value="P:toll-like receptor signaling pathway"/>
    <property type="evidence" value="ECO:0000250"/>
    <property type="project" value="ARUK-UCL"/>
</dbReference>
<dbReference type="GO" id="GO:0016055">
    <property type="term" value="P:Wnt signaling pathway"/>
    <property type="evidence" value="ECO:0000304"/>
    <property type="project" value="UniProtKB"/>
</dbReference>
<dbReference type="CDD" id="cd00275">
    <property type="entry name" value="C2_PLC_like"/>
    <property type="match status" value="1"/>
</dbReference>
<dbReference type="CDD" id="cd16215">
    <property type="entry name" value="EFh_PI-PLCgamma2"/>
    <property type="match status" value="1"/>
</dbReference>
<dbReference type="CDD" id="cd13362">
    <property type="entry name" value="PH_PLC_gamma"/>
    <property type="match status" value="1"/>
</dbReference>
<dbReference type="CDD" id="cd13234">
    <property type="entry name" value="PHsplit_PLC_gamma"/>
    <property type="match status" value="1"/>
</dbReference>
<dbReference type="CDD" id="cd08592">
    <property type="entry name" value="PI-PLCc_gamma"/>
    <property type="match status" value="1"/>
</dbReference>
<dbReference type="CDD" id="cd09932">
    <property type="entry name" value="SH2_C-SH2_PLC_gamma_like"/>
    <property type="match status" value="1"/>
</dbReference>
<dbReference type="CDD" id="cd10341">
    <property type="entry name" value="SH2_N-SH2_PLC_gamma_like"/>
    <property type="match status" value="1"/>
</dbReference>
<dbReference type="CDD" id="cd11969">
    <property type="entry name" value="SH3_PLCgamma2"/>
    <property type="match status" value="1"/>
</dbReference>
<dbReference type="FunFam" id="2.30.29.30:FF:000168">
    <property type="entry name" value="1-phosphatidylinositol 4,5-bisphosphate phosphodiesterase gamma"/>
    <property type="match status" value="1"/>
</dbReference>
<dbReference type="FunFam" id="2.30.30.40:FF:000119">
    <property type="entry name" value="1-phosphatidylinositol 4,5-bisphosphate phosphodiesterase gamma"/>
    <property type="match status" value="1"/>
</dbReference>
<dbReference type="FunFam" id="2.60.40.150:FF:000094">
    <property type="entry name" value="1-phosphatidylinositol 4,5-bisphosphate phosphodiesterase gamma"/>
    <property type="match status" value="1"/>
</dbReference>
<dbReference type="FunFam" id="3.20.20.190:FF:000012">
    <property type="entry name" value="1-phosphatidylinositol 4,5-bisphosphate phosphodiesterase gamma"/>
    <property type="match status" value="1"/>
</dbReference>
<dbReference type="FunFam" id="3.20.20.190:FF:000016">
    <property type="entry name" value="1-phosphatidylinositol 4,5-bisphosphate phosphodiesterase gamma"/>
    <property type="match status" value="1"/>
</dbReference>
<dbReference type="FunFam" id="3.30.505.10:FF:000009">
    <property type="entry name" value="1-phosphatidylinositol 4,5-bisphosphate phosphodiesterase gamma"/>
    <property type="match status" value="1"/>
</dbReference>
<dbReference type="FunFam" id="3.30.505.10:FF:000011">
    <property type="entry name" value="1-phosphatidylinositol 4,5-bisphosphate phosphodiesterase gamma"/>
    <property type="match status" value="1"/>
</dbReference>
<dbReference type="Gene3D" id="2.60.40.150">
    <property type="entry name" value="C2 domain"/>
    <property type="match status" value="1"/>
</dbReference>
<dbReference type="Gene3D" id="3.20.20.190">
    <property type="entry name" value="Phosphatidylinositol (PI) phosphodiesterase"/>
    <property type="match status" value="2"/>
</dbReference>
<dbReference type="Gene3D" id="2.30.29.30">
    <property type="entry name" value="Pleckstrin-homology domain (PH domain)/Phosphotyrosine-binding domain (PTB)"/>
    <property type="match status" value="1"/>
</dbReference>
<dbReference type="Gene3D" id="3.30.505.10">
    <property type="entry name" value="SH2 domain"/>
    <property type="match status" value="2"/>
</dbReference>
<dbReference type="Gene3D" id="2.30.30.40">
    <property type="entry name" value="SH3 Domains"/>
    <property type="match status" value="1"/>
</dbReference>
<dbReference type="InterPro" id="IPR000008">
    <property type="entry name" value="C2_dom"/>
</dbReference>
<dbReference type="InterPro" id="IPR035892">
    <property type="entry name" value="C2_domain_sf"/>
</dbReference>
<dbReference type="InterPro" id="IPR011992">
    <property type="entry name" value="EF-hand-dom_pair"/>
</dbReference>
<dbReference type="InterPro" id="IPR011993">
    <property type="entry name" value="PH-like_dom_sf"/>
</dbReference>
<dbReference type="InterPro" id="IPR001849">
    <property type="entry name" value="PH_domain"/>
</dbReference>
<dbReference type="InterPro" id="IPR001192">
    <property type="entry name" value="PI-PLC_fam"/>
</dbReference>
<dbReference type="InterPro" id="IPR016279">
    <property type="entry name" value="PLC-gamma"/>
</dbReference>
<dbReference type="InterPro" id="IPR035023">
    <property type="entry name" value="PLC-gamma_C-SH2"/>
</dbReference>
<dbReference type="InterPro" id="IPR035024">
    <property type="entry name" value="PLC-gamma_N-SH2"/>
</dbReference>
<dbReference type="InterPro" id="IPR017946">
    <property type="entry name" value="PLC-like_Pdiesterase_TIM-brl"/>
</dbReference>
<dbReference type="InterPro" id="IPR057061">
    <property type="entry name" value="PLCG_EF-hand_2"/>
</dbReference>
<dbReference type="InterPro" id="IPR035723">
    <property type="entry name" value="PLCgamma2_SH3"/>
</dbReference>
<dbReference type="InterPro" id="IPR000909">
    <property type="entry name" value="PLipase_C_PInositol-sp_X_dom"/>
</dbReference>
<dbReference type="InterPro" id="IPR001711">
    <property type="entry name" value="PLipase_C_Pinositol-sp_Y"/>
</dbReference>
<dbReference type="InterPro" id="IPR000980">
    <property type="entry name" value="SH2"/>
</dbReference>
<dbReference type="InterPro" id="IPR036860">
    <property type="entry name" value="SH2_dom_sf"/>
</dbReference>
<dbReference type="InterPro" id="IPR036028">
    <property type="entry name" value="SH3-like_dom_sf"/>
</dbReference>
<dbReference type="InterPro" id="IPR001452">
    <property type="entry name" value="SH3_domain"/>
</dbReference>
<dbReference type="PANTHER" id="PTHR10336:SF25">
    <property type="entry name" value="1-PHOSPHATIDYLINOSITOL 4,5-BISPHOSPHATE PHOSPHODIESTERASE GAMMA-2"/>
    <property type="match status" value="1"/>
</dbReference>
<dbReference type="PANTHER" id="PTHR10336">
    <property type="entry name" value="PHOSPHOINOSITIDE-SPECIFIC PHOSPHOLIPASE C FAMILY PROTEIN"/>
    <property type="match status" value="1"/>
</dbReference>
<dbReference type="Pfam" id="PF00168">
    <property type="entry name" value="C2"/>
    <property type="match status" value="1"/>
</dbReference>
<dbReference type="Pfam" id="PF23583">
    <property type="entry name" value="EF_HAND_2_PLCG"/>
    <property type="match status" value="1"/>
</dbReference>
<dbReference type="Pfam" id="PF16457">
    <property type="entry name" value="PH_12"/>
    <property type="match status" value="1"/>
</dbReference>
<dbReference type="Pfam" id="PF00388">
    <property type="entry name" value="PI-PLC-X"/>
    <property type="match status" value="1"/>
</dbReference>
<dbReference type="Pfam" id="PF00387">
    <property type="entry name" value="PI-PLC-Y"/>
    <property type="match status" value="1"/>
</dbReference>
<dbReference type="Pfam" id="PF00017">
    <property type="entry name" value="SH2"/>
    <property type="match status" value="2"/>
</dbReference>
<dbReference type="Pfam" id="PF00018">
    <property type="entry name" value="SH3_1"/>
    <property type="match status" value="1"/>
</dbReference>
<dbReference type="PIRSF" id="PIRSF000952">
    <property type="entry name" value="PLC-gamma"/>
    <property type="match status" value="1"/>
</dbReference>
<dbReference type="PRINTS" id="PR00390">
    <property type="entry name" value="PHPHLIPASEC"/>
</dbReference>
<dbReference type="PRINTS" id="PR00401">
    <property type="entry name" value="SH2DOMAIN"/>
</dbReference>
<dbReference type="PRINTS" id="PR00452">
    <property type="entry name" value="SH3DOMAIN"/>
</dbReference>
<dbReference type="SMART" id="SM00239">
    <property type="entry name" value="C2"/>
    <property type="match status" value="1"/>
</dbReference>
<dbReference type="SMART" id="SM00233">
    <property type="entry name" value="PH"/>
    <property type="match status" value="2"/>
</dbReference>
<dbReference type="SMART" id="SM00148">
    <property type="entry name" value="PLCXc"/>
    <property type="match status" value="1"/>
</dbReference>
<dbReference type="SMART" id="SM00149">
    <property type="entry name" value="PLCYc"/>
    <property type="match status" value="1"/>
</dbReference>
<dbReference type="SMART" id="SM00252">
    <property type="entry name" value="SH2"/>
    <property type="match status" value="2"/>
</dbReference>
<dbReference type="SMART" id="SM00326">
    <property type="entry name" value="SH3"/>
    <property type="match status" value="1"/>
</dbReference>
<dbReference type="SUPFAM" id="SSF49562">
    <property type="entry name" value="C2 domain (Calcium/lipid-binding domain, CaLB)"/>
    <property type="match status" value="1"/>
</dbReference>
<dbReference type="SUPFAM" id="SSF47473">
    <property type="entry name" value="EF-hand"/>
    <property type="match status" value="1"/>
</dbReference>
<dbReference type="SUPFAM" id="SSF50729">
    <property type="entry name" value="PH domain-like"/>
    <property type="match status" value="1"/>
</dbReference>
<dbReference type="SUPFAM" id="SSF51695">
    <property type="entry name" value="PLC-like phosphodiesterases"/>
    <property type="match status" value="1"/>
</dbReference>
<dbReference type="SUPFAM" id="SSF55550">
    <property type="entry name" value="SH2 domain"/>
    <property type="match status" value="2"/>
</dbReference>
<dbReference type="SUPFAM" id="SSF50044">
    <property type="entry name" value="SH3-domain"/>
    <property type="match status" value="1"/>
</dbReference>
<dbReference type="PROSITE" id="PS50004">
    <property type="entry name" value="C2"/>
    <property type="match status" value="1"/>
</dbReference>
<dbReference type="PROSITE" id="PS50003">
    <property type="entry name" value="PH_DOMAIN"/>
    <property type="match status" value="1"/>
</dbReference>
<dbReference type="PROSITE" id="PS50007">
    <property type="entry name" value="PIPLC_X_DOMAIN"/>
    <property type="match status" value="1"/>
</dbReference>
<dbReference type="PROSITE" id="PS50008">
    <property type="entry name" value="PIPLC_Y_DOMAIN"/>
    <property type="match status" value="1"/>
</dbReference>
<dbReference type="PROSITE" id="PS50001">
    <property type="entry name" value="SH2"/>
    <property type="match status" value="2"/>
</dbReference>
<dbReference type="PROSITE" id="PS50002">
    <property type="entry name" value="SH3"/>
    <property type="match status" value="1"/>
</dbReference>
<organism>
    <name type="scientific">Homo sapiens</name>
    <name type="common">Human</name>
    <dbReference type="NCBI Taxonomy" id="9606"/>
    <lineage>
        <taxon>Eukaryota</taxon>
        <taxon>Metazoa</taxon>
        <taxon>Chordata</taxon>
        <taxon>Craniata</taxon>
        <taxon>Vertebrata</taxon>
        <taxon>Euteleostomi</taxon>
        <taxon>Mammalia</taxon>
        <taxon>Eutheria</taxon>
        <taxon>Euarchontoglires</taxon>
        <taxon>Primates</taxon>
        <taxon>Haplorrhini</taxon>
        <taxon>Catarrhini</taxon>
        <taxon>Hominidae</taxon>
        <taxon>Homo</taxon>
    </lineage>
</organism>
<gene>
    <name evidence="18" type="primary">PLCG2</name>
</gene>
<sequence length="1265" mass="147870">MSTTVNVDSLAEYEKSQIKRALELGTVMTVFSFRKSTPERRTVQVIMETRQVAWSKTADKIEGFLDIMEIKEIRPGKNSKDFERAKAVRQKEDCCFTILYGTQFVLSTLSLAADSKEDAVNWLSGLKILHQEAMNASTPTIIESWLRKQIYSVDQTRRNSISLRELKTILPLINFKVSSAKFLKDKFVEIGAHKDELSFEQFHLFYKKLMFEQQKSILDEFKKDSSVFILGNTDRPDASAVYLHDFQRFLIHEQQEHWAQDLNKVRERMTKFIDDTMRETAEPFLFVDEFLTYLFSRENSIWDEKYDAVDMQDMNNPLSHYWISSSHNTYLTGDQLRSESSPEAYIRCLRMGCRCIELDCWDGPDGKPVIYHGWTRTTKIKFDDVVQAIKDHAFVTSSFPVILSIEEHCSVEQQRHMAKAFKEVFGDLLLTKPTEASADQLPSPSQLREKIIIKHKKLGPRGDVDVNMEDKKDEHKQQGELYMWDSIDQKWTRHYCAIADAKLSFSDDIEQTMEEEVPQDIPPTELHFGEKWFHKKVEKRTSAEKLLQEYCMETGGKDGTFLVRESETFPNDYTLSFWRSGRVQHCRIRSTMEGGTLKYYLTDNLTFSSIYALIQHYRETHLRCAEFELRLTDPVPNPNPHESKPWYYDSLSRGEAEDMLMRIPRDGAFLIRKREGSDSYAITFRARGKVKHCRINRDGRHFVLGTSAYFESLVELVSYYEKHSLYRKMRLRYPVTPELLERYNMERDINSLYDVSRMYVDPSEINPSMPQRTVKALYDYKAKRSDELSFCRGALIHNVSKEPGGWWKGDYGTRIQQYFPSNYVEDISTADFEELEKQIIEDNPLGSLCRGILDLNTYNVVKAPQGKNQKSFVFILEPKQQGDPPVEFATDRVEELFEWFQSIREITWKIDTKENNMKYWEKNQSIAIELSDLVVYCKPTSKTKDNLENPDFREIRSFVETKADSIIRQKPVDLLKYNQKGLTRVYPKGQRVDSSNYDPFRLWLCGSQMVALNFQTADKYMQMNHALFSLNGRTGYVLQPESMRTEKYDPMPPESQRKILMTLTVKVLGARHLPKLGRSIACPFVEVEICGAEYDNNKFKTTVVNDNGLSPIWAPTQEKVTFEIYDPNLAFLRFVVYEEDMFSDPNFLAHATYPIKAVKSGFRSVPLKNGYSEDIELASLLVFCEMRPVLESEEELYSSCRQLRRRQEELNNQLFLYDTHQNLRNANRDALVKEFSVNENQLQLYQEKCNKRLREKRVSNSKFYS</sequence>
<keyword id="KW-0002">3D-structure</keyword>
<keyword id="KW-0106">Calcium</keyword>
<keyword id="KW-0225">Disease variant</keyword>
<keyword id="KW-0378">Hydrolase</keyword>
<keyword id="KW-0442">Lipid degradation</keyword>
<keyword id="KW-0443">Lipid metabolism</keyword>
<keyword id="KW-0472">Membrane</keyword>
<keyword id="KW-0597">Phosphoprotein</keyword>
<keyword id="KW-1267">Proteomics identification</keyword>
<keyword id="KW-1185">Reference proteome</keyword>
<keyword id="KW-0677">Repeat</keyword>
<keyword id="KW-0727">SH2 domain</keyword>
<keyword id="KW-0728">SH3 domain</keyword>
<keyword id="KW-0807">Transducer</keyword>